<reference key="1">
    <citation type="journal article" date="2002" name="Nucleic Acids Res.">
        <title>Genome sequence of Oceanobacillus iheyensis isolated from the Iheya Ridge and its unexpected adaptive capabilities to extreme environments.</title>
        <authorList>
            <person name="Takami H."/>
            <person name="Takaki Y."/>
            <person name="Uchiyama I."/>
        </authorList>
    </citation>
    <scope>NUCLEOTIDE SEQUENCE [LARGE SCALE GENOMIC DNA]</scope>
    <source>
        <strain>DSM 14371 / CIP 107618 / JCM 11309 / KCTC 3954 / HTE831</strain>
    </source>
</reference>
<organism>
    <name type="scientific">Oceanobacillus iheyensis (strain DSM 14371 / CIP 107618 / JCM 11309 / KCTC 3954 / HTE831)</name>
    <dbReference type="NCBI Taxonomy" id="221109"/>
    <lineage>
        <taxon>Bacteria</taxon>
        <taxon>Bacillati</taxon>
        <taxon>Bacillota</taxon>
        <taxon>Bacilli</taxon>
        <taxon>Bacillales</taxon>
        <taxon>Bacillaceae</taxon>
        <taxon>Oceanobacillus</taxon>
    </lineage>
</organism>
<comment type="function">
    <text evidence="1">Catalyzes oxygen-dependent 5-hydroxyuridine (ho5U) modification at position 34 in tRNAs.</text>
</comment>
<comment type="catalytic activity">
    <reaction evidence="1">
        <text>uridine(34) in tRNA + AH2 + O2 = 5-hydroxyuridine(34) in tRNA + A + H2O</text>
        <dbReference type="Rhea" id="RHEA:64224"/>
        <dbReference type="Rhea" id="RHEA-COMP:11727"/>
        <dbReference type="Rhea" id="RHEA-COMP:13381"/>
        <dbReference type="ChEBI" id="CHEBI:13193"/>
        <dbReference type="ChEBI" id="CHEBI:15377"/>
        <dbReference type="ChEBI" id="CHEBI:15379"/>
        <dbReference type="ChEBI" id="CHEBI:17499"/>
        <dbReference type="ChEBI" id="CHEBI:65315"/>
        <dbReference type="ChEBI" id="CHEBI:136877"/>
    </reaction>
</comment>
<comment type="similarity">
    <text evidence="1">Belongs to the TrhO family.</text>
</comment>
<sequence>MESNQEYQVLLYYQYVTIDDPEAFAEEHLRYCKEIGLKGRILVANEGINGTVSGTIEQTTAYMDHMHNDERFHDMTFKIDPHEGHTFKKMHVRPRPELVTLRLEDDVNPLETTGEYLEPKDFYQALQDENTVVLDARNDYEYDLGHFRGAIRPDIKTFRDLPDWVQENKDMLEGKKVVTYCTGGIRCEKFSGWLVKEGFEDVAQLHGGIVTYGQDPEVQGDLWDGQLYVFDERISVPVNRKEHVIVGKDYFDGEPCERYVNCANPECNKQILASEENEHKYLRGCTHECRVTPRNLYVKEHELTGTQVEERLLAIGESLTQEV</sequence>
<accession>Q8ESP9</accession>
<feature type="chain" id="PRO_0000161489" description="tRNA uridine(34) hydroxylase">
    <location>
        <begin position="1"/>
        <end position="323"/>
    </location>
</feature>
<feature type="domain" description="Rhodanese" evidence="1">
    <location>
        <begin position="127"/>
        <end position="221"/>
    </location>
</feature>
<feature type="active site" description="Cysteine persulfide intermediate" evidence="1">
    <location>
        <position position="181"/>
    </location>
</feature>
<evidence type="ECO:0000255" key="1">
    <source>
        <dbReference type="HAMAP-Rule" id="MF_00469"/>
    </source>
</evidence>
<keyword id="KW-0560">Oxidoreductase</keyword>
<keyword id="KW-1185">Reference proteome</keyword>
<keyword id="KW-0819">tRNA processing</keyword>
<proteinExistence type="inferred from homology"/>
<protein>
    <recommendedName>
        <fullName evidence="1">tRNA uridine(34) hydroxylase</fullName>
        <ecNumber evidence="1">1.14.-.-</ecNumber>
    </recommendedName>
    <alternativeName>
        <fullName evidence="1">tRNA hydroxylation protein O</fullName>
    </alternativeName>
</protein>
<name>TRHO_OCEIH</name>
<dbReference type="EC" id="1.14.-.-" evidence="1"/>
<dbReference type="EMBL" id="BA000028">
    <property type="protein sequence ID" value="BAC12528.1"/>
    <property type="molecule type" value="Genomic_DNA"/>
</dbReference>
<dbReference type="RefSeq" id="WP_011064975.1">
    <property type="nucleotide sequence ID" value="NC_004193.1"/>
</dbReference>
<dbReference type="SMR" id="Q8ESP9"/>
<dbReference type="STRING" id="221109.gene:10732776"/>
<dbReference type="KEGG" id="oih:OB0572"/>
<dbReference type="eggNOG" id="COG1054">
    <property type="taxonomic scope" value="Bacteria"/>
</dbReference>
<dbReference type="HOGENOM" id="CLU_038878_1_0_9"/>
<dbReference type="OrthoDB" id="9778326at2"/>
<dbReference type="PhylomeDB" id="Q8ESP9"/>
<dbReference type="Proteomes" id="UP000000822">
    <property type="component" value="Chromosome"/>
</dbReference>
<dbReference type="GO" id="GO:0016705">
    <property type="term" value="F:oxidoreductase activity, acting on paired donors, with incorporation or reduction of molecular oxygen"/>
    <property type="evidence" value="ECO:0007669"/>
    <property type="project" value="UniProtKB-UniRule"/>
</dbReference>
<dbReference type="GO" id="GO:0006400">
    <property type="term" value="P:tRNA modification"/>
    <property type="evidence" value="ECO:0007669"/>
    <property type="project" value="UniProtKB-UniRule"/>
</dbReference>
<dbReference type="CDD" id="cd01518">
    <property type="entry name" value="RHOD_YceA"/>
    <property type="match status" value="1"/>
</dbReference>
<dbReference type="Gene3D" id="3.30.70.100">
    <property type="match status" value="1"/>
</dbReference>
<dbReference type="Gene3D" id="3.40.250.10">
    <property type="entry name" value="Rhodanese-like domain"/>
    <property type="match status" value="1"/>
</dbReference>
<dbReference type="HAMAP" id="MF_00469">
    <property type="entry name" value="TrhO"/>
    <property type="match status" value="1"/>
</dbReference>
<dbReference type="InterPro" id="IPR001763">
    <property type="entry name" value="Rhodanese-like_dom"/>
</dbReference>
<dbReference type="InterPro" id="IPR036873">
    <property type="entry name" value="Rhodanese-like_dom_sf"/>
</dbReference>
<dbReference type="InterPro" id="IPR022111">
    <property type="entry name" value="Rhodanese_C"/>
</dbReference>
<dbReference type="InterPro" id="IPR020936">
    <property type="entry name" value="TrhO"/>
</dbReference>
<dbReference type="InterPro" id="IPR040503">
    <property type="entry name" value="TRHO_N"/>
</dbReference>
<dbReference type="NCBIfam" id="NF001135">
    <property type="entry name" value="PRK00142.1-3"/>
    <property type="match status" value="1"/>
</dbReference>
<dbReference type="PANTHER" id="PTHR43268:SF3">
    <property type="entry name" value="RHODANESE-LIKE DOMAIN-CONTAINING PROTEIN 7-RELATED"/>
    <property type="match status" value="1"/>
</dbReference>
<dbReference type="PANTHER" id="PTHR43268">
    <property type="entry name" value="THIOSULFATE SULFURTRANSFERASE/RHODANESE-LIKE DOMAIN-CONTAINING PROTEIN 2"/>
    <property type="match status" value="1"/>
</dbReference>
<dbReference type="Pfam" id="PF00581">
    <property type="entry name" value="Rhodanese"/>
    <property type="match status" value="1"/>
</dbReference>
<dbReference type="Pfam" id="PF12368">
    <property type="entry name" value="Rhodanese_C"/>
    <property type="match status" value="1"/>
</dbReference>
<dbReference type="Pfam" id="PF17773">
    <property type="entry name" value="UPF0176_N"/>
    <property type="match status" value="1"/>
</dbReference>
<dbReference type="SMART" id="SM00450">
    <property type="entry name" value="RHOD"/>
    <property type="match status" value="1"/>
</dbReference>
<dbReference type="SUPFAM" id="SSF52821">
    <property type="entry name" value="Rhodanese/Cell cycle control phosphatase"/>
    <property type="match status" value="1"/>
</dbReference>
<dbReference type="PROSITE" id="PS50206">
    <property type="entry name" value="RHODANESE_3"/>
    <property type="match status" value="1"/>
</dbReference>
<gene>
    <name evidence="1" type="primary">trhO</name>
    <name type="ordered locus">OB0572</name>
</gene>